<proteinExistence type="inferred from homology"/>
<evidence type="ECO:0000305" key="1"/>
<protein>
    <recommendedName>
        <fullName>Putative pentatricopeptide repeat-containing protein At3g23330</fullName>
    </recommendedName>
</protein>
<organism>
    <name type="scientific">Arabidopsis thaliana</name>
    <name type="common">Mouse-ear cress</name>
    <dbReference type="NCBI Taxonomy" id="3702"/>
    <lineage>
        <taxon>Eukaryota</taxon>
        <taxon>Viridiplantae</taxon>
        <taxon>Streptophyta</taxon>
        <taxon>Embryophyta</taxon>
        <taxon>Tracheophyta</taxon>
        <taxon>Spermatophyta</taxon>
        <taxon>Magnoliopsida</taxon>
        <taxon>eudicotyledons</taxon>
        <taxon>Gunneridae</taxon>
        <taxon>Pentapetalae</taxon>
        <taxon>rosids</taxon>
        <taxon>malvids</taxon>
        <taxon>Brassicales</taxon>
        <taxon>Brassicaceae</taxon>
        <taxon>Camelineae</taxon>
        <taxon>Arabidopsis</taxon>
    </lineage>
</organism>
<keyword id="KW-1185">Reference proteome</keyword>
<keyword id="KW-0677">Repeat</keyword>
<reference key="1">
    <citation type="journal article" date="2000" name="DNA Res.">
        <title>Structural analysis of Arabidopsis thaliana chromosome 3. I. Sequence features of the regions of 4,504,864 bp covered by sixty P1 and TAC clones.</title>
        <authorList>
            <person name="Sato S."/>
            <person name="Nakamura Y."/>
            <person name="Kaneko T."/>
            <person name="Katoh T."/>
            <person name="Asamizu E."/>
            <person name="Tabata S."/>
        </authorList>
    </citation>
    <scope>NUCLEOTIDE SEQUENCE [LARGE SCALE GENOMIC DNA]</scope>
    <source>
        <strain>cv. Columbia</strain>
    </source>
</reference>
<reference key="2">
    <citation type="journal article" date="2017" name="Plant J.">
        <title>Araport11: a complete reannotation of the Arabidopsis thaliana reference genome.</title>
        <authorList>
            <person name="Cheng C.Y."/>
            <person name="Krishnakumar V."/>
            <person name="Chan A.P."/>
            <person name="Thibaud-Nissen F."/>
            <person name="Schobel S."/>
            <person name="Town C.D."/>
        </authorList>
    </citation>
    <scope>GENOME REANNOTATION</scope>
    <source>
        <strain>cv. Columbia</strain>
    </source>
</reference>
<reference key="3">
    <citation type="journal article" date="2000" name="Plant Mol. Biol.">
        <title>In Arabidopsis thaliana, 1% of the genome codes for a novel protein family unique to plants.</title>
        <authorList>
            <person name="Aubourg S."/>
            <person name="Boudet N."/>
            <person name="Kreis M."/>
            <person name="Lecharny A."/>
        </authorList>
    </citation>
    <scope>GENE FAMILY</scope>
</reference>
<reference key="4">
    <citation type="journal article" date="2004" name="Plant Cell">
        <title>Genome-wide analysis of Arabidopsis pentatricopeptide repeat proteins reveals their essential role in organelle biogenesis.</title>
        <authorList>
            <person name="Lurin C."/>
            <person name="Andres C."/>
            <person name="Aubourg S."/>
            <person name="Bellaoui M."/>
            <person name="Bitton F."/>
            <person name="Bruyere C."/>
            <person name="Caboche M."/>
            <person name="Debast C."/>
            <person name="Gualberto J."/>
            <person name="Hoffmann B."/>
            <person name="Lecharny A."/>
            <person name="Le Ret M."/>
            <person name="Martin-Magniette M.-L."/>
            <person name="Mireau H."/>
            <person name="Peeters N."/>
            <person name="Renou J.-P."/>
            <person name="Szurek B."/>
            <person name="Taconnat L."/>
            <person name="Small I."/>
        </authorList>
    </citation>
    <scope>GENE FAMILY</scope>
</reference>
<comment type="similarity">
    <text evidence="1">Belongs to the PPR family. PCMP-H subfamily.</text>
</comment>
<comment type="online information" name="Pentatricopeptide repeat proteins">
    <link uri="https://ppr.plantenergy.uwa.edu.au"/>
</comment>
<feature type="chain" id="PRO_0000356110" description="Putative pentatricopeptide repeat-containing protein At3g23330">
    <location>
        <begin position="1"/>
        <end position="715"/>
    </location>
</feature>
<feature type="repeat" description="PPR 1">
    <location>
        <begin position="38"/>
        <end position="68"/>
    </location>
</feature>
<feature type="repeat" description="PPR 2">
    <location>
        <begin position="69"/>
        <end position="103"/>
    </location>
</feature>
<feature type="repeat" description="PPR 3">
    <location>
        <begin position="104"/>
        <end position="138"/>
    </location>
</feature>
<feature type="repeat" description="PPR 4">
    <location>
        <begin position="139"/>
        <end position="172"/>
    </location>
</feature>
<feature type="repeat" description="PPR 5">
    <location>
        <begin position="206"/>
        <end position="240"/>
    </location>
</feature>
<feature type="repeat" description="PPR 6">
    <location>
        <begin position="241"/>
        <end position="275"/>
    </location>
</feature>
<feature type="repeat" description="PPR 7">
    <location>
        <begin position="276"/>
        <end position="306"/>
    </location>
</feature>
<feature type="repeat" description="PPR 8">
    <location>
        <begin position="307"/>
        <end position="341"/>
    </location>
</feature>
<feature type="repeat" description="PPR 9">
    <location>
        <begin position="342"/>
        <end position="376"/>
    </location>
</feature>
<feature type="repeat" description="PPR 10">
    <location>
        <begin position="377"/>
        <end position="407"/>
    </location>
</feature>
<feature type="repeat" description="PPR 11">
    <location>
        <begin position="408"/>
        <end position="442"/>
    </location>
</feature>
<feature type="repeat" description="PPR 12">
    <location>
        <begin position="443"/>
        <end position="473"/>
    </location>
</feature>
<feature type="repeat" description="PPR 13">
    <location>
        <begin position="479"/>
        <end position="509"/>
    </location>
</feature>
<feature type="region of interest" description="Type E motif">
    <location>
        <begin position="514"/>
        <end position="589"/>
    </location>
</feature>
<feature type="region of interest" description="Type E(+) motif">
    <location>
        <begin position="590"/>
        <end position="620"/>
    </location>
</feature>
<feature type="region of interest" description="Type DYW motif">
    <location>
        <begin position="621"/>
        <end position="715"/>
    </location>
</feature>
<sequence>MSSSKALIKTLIKNPTRIKSKSQAKQLHAQFIRTQSLSHTSASIVISIYTNLKLLHEALLLFKTLKSPPVLAWKSVIRCFTDQSLFSKALASFVEMRASGRCPDHNVFPSVLKSCTMMMDLRFGESVHGFIVRLGMDCDLYTGNALMNMYAKLLGMGSKISVGNVFDEMPQRTSNSGDEDVKAETCIMPFGIDSVRRVFEVMPRKDVVSYNTIIAGYAQSGMYEDALRMVREMGTTDLKPDSFTLSSVLPIFSEYVDVIKGKEIHGYVIRKGIDSDVYIGSSLVDMYAKSARIEDSERVFSRLYCRDGISWNSLVAGYVQNGRYNEALRLFRQMVTAKVKPGAVAFSSVIPACAHLATLHLGKQLHGYVLRGGFGSNIFIASALVDMYSKCGNIKAARKIFDRMNVLDEVSWTAIIMGHALHGHGHEAVSLFEEMKRQGVKPNQVAFVAVLTACSHVGLVDEAWGYFNSMTKVYGLNQELEHYAAVADLLGRAGKLEEAYNFISKMCVEPTGSVWSTLLSSCSVHKNLELAEKVAEKIFTVDSENMGAYVLMCNMYASNGRWKEMAKLRLRMRKKGLRKKPACSWIEMKNKTHGFVSGDRSHPSMDKINEFLKAVMEQMEKEGYVADTSGVLHDVDEEHKRELLFGHSERLAVAFGIINTEPGTTIRVTKNIRICTDCHVAIKFISKITEREIIVRDNSRFHHFNRGNCSCGDYW</sequence>
<gene>
    <name type="primary">PCMP-H32</name>
    <name type="ordered locus">At3g23330</name>
    <name type="ORF">MLM24.6</name>
</gene>
<accession>Q9LW63</accession>
<name>PP251_ARATH</name>
<dbReference type="EMBL" id="AB015474">
    <property type="protein sequence ID" value="BAB02277.1"/>
    <property type="molecule type" value="Genomic_DNA"/>
</dbReference>
<dbReference type="EMBL" id="CP002686">
    <property type="protein sequence ID" value="AEE76753.1"/>
    <property type="molecule type" value="Genomic_DNA"/>
</dbReference>
<dbReference type="RefSeq" id="NP_188975.3">
    <property type="nucleotide sequence ID" value="NM_113236.4"/>
</dbReference>
<dbReference type="SMR" id="Q9LW63"/>
<dbReference type="FunCoup" id="Q9LW63">
    <property type="interactions" value="401"/>
</dbReference>
<dbReference type="PaxDb" id="3702-AT3G23330.1"/>
<dbReference type="ProteomicsDB" id="249187"/>
<dbReference type="EnsemblPlants" id="AT3G23330.1">
    <property type="protein sequence ID" value="AT3G23330.1"/>
    <property type="gene ID" value="AT3G23330"/>
</dbReference>
<dbReference type="GeneID" id="821914"/>
<dbReference type="Gramene" id="AT3G23330.1">
    <property type="protein sequence ID" value="AT3G23330.1"/>
    <property type="gene ID" value="AT3G23330"/>
</dbReference>
<dbReference type="KEGG" id="ath:AT3G23330"/>
<dbReference type="Araport" id="AT3G23330"/>
<dbReference type="TAIR" id="AT3G23330"/>
<dbReference type="eggNOG" id="KOG4197">
    <property type="taxonomic scope" value="Eukaryota"/>
</dbReference>
<dbReference type="HOGENOM" id="CLU_002706_15_10_1"/>
<dbReference type="InParanoid" id="Q9LW63"/>
<dbReference type="OMA" id="KCGNIKM"/>
<dbReference type="OrthoDB" id="185373at2759"/>
<dbReference type="PhylomeDB" id="Q9LW63"/>
<dbReference type="PRO" id="PR:Q9LW63"/>
<dbReference type="Proteomes" id="UP000006548">
    <property type="component" value="Chromosome 3"/>
</dbReference>
<dbReference type="ExpressionAtlas" id="Q9LW63">
    <property type="expression patterns" value="baseline and differential"/>
</dbReference>
<dbReference type="GO" id="GO:0003723">
    <property type="term" value="F:RNA binding"/>
    <property type="evidence" value="ECO:0007669"/>
    <property type="project" value="InterPro"/>
</dbReference>
<dbReference type="GO" id="GO:0008270">
    <property type="term" value="F:zinc ion binding"/>
    <property type="evidence" value="ECO:0007669"/>
    <property type="project" value="InterPro"/>
</dbReference>
<dbReference type="GO" id="GO:0009451">
    <property type="term" value="P:RNA modification"/>
    <property type="evidence" value="ECO:0007669"/>
    <property type="project" value="InterPro"/>
</dbReference>
<dbReference type="FunFam" id="1.25.40.10:FF:000073">
    <property type="entry name" value="Pentatricopeptide repeat-containing protein chloroplastic"/>
    <property type="match status" value="1"/>
</dbReference>
<dbReference type="FunFam" id="1.25.40.10:FF:000031">
    <property type="entry name" value="Pentatricopeptide repeat-containing protein mitochondrial"/>
    <property type="match status" value="1"/>
</dbReference>
<dbReference type="FunFam" id="1.25.40.10:FF:002014">
    <property type="entry name" value="Putative pentatricopeptide repeat-containing protein"/>
    <property type="match status" value="1"/>
</dbReference>
<dbReference type="FunFam" id="1.25.40.10:FF:002435">
    <property type="entry name" value="Putative pentatricopeptide repeat-containing protein At3g23330"/>
    <property type="match status" value="1"/>
</dbReference>
<dbReference type="Gene3D" id="1.25.40.10">
    <property type="entry name" value="Tetratricopeptide repeat domain"/>
    <property type="match status" value="5"/>
</dbReference>
<dbReference type="InterPro" id="IPR032867">
    <property type="entry name" value="DYW_dom"/>
</dbReference>
<dbReference type="InterPro" id="IPR046848">
    <property type="entry name" value="E_motif"/>
</dbReference>
<dbReference type="InterPro" id="IPR002885">
    <property type="entry name" value="Pentatricopeptide_rpt"/>
</dbReference>
<dbReference type="InterPro" id="IPR046960">
    <property type="entry name" value="PPR_At4g14850-like_plant"/>
</dbReference>
<dbReference type="InterPro" id="IPR011990">
    <property type="entry name" value="TPR-like_helical_dom_sf"/>
</dbReference>
<dbReference type="NCBIfam" id="TIGR00756">
    <property type="entry name" value="PPR"/>
    <property type="match status" value="3"/>
</dbReference>
<dbReference type="PANTHER" id="PTHR47926:SF518">
    <property type="entry name" value="(WILD MALAYSIAN BANANA) HYPOTHETICAL PROTEIN"/>
    <property type="match status" value="1"/>
</dbReference>
<dbReference type="PANTHER" id="PTHR47926">
    <property type="entry name" value="PENTATRICOPEPTIDE REPEAT-CONTAINING PROTEIN"/>
    <property type="match status" value="1"/>
</dbReference>
<dbReference type="Pfam" id="PF14432">
    <property type="entry name" value="DYW_deaminase"/>
    <property type="match status" value="1"/>
</dbReference>
<dbReference type="Pfam" id="PF20431">
    <property type="entry name" value="E_motif"/>
    <property type="match status" value="1"/>
</dbReference>
<dbReference type="Pfam" id="PF01535">
    <property type="entry name" value="PPR"/>
    <property type="match status" value="2"/>
</dbReference>
<dbReference type="Pfam" id="PF13041">
    <property type="entry name" value="PPR_2"/>
    <property type="match status" value="3"/>
</dbReference>
<dbReference type="SUPFAM" id="SSF48452">
    <property type="entry name" value="TPR-like"/>
    <property type="match status" value="1"/>
</dbReference>
<dbReference type="PROSITE" id="PS51375">
    <property type="entry name" value="PPR"/>
    <property type="match status" value="14"/>
</dbReference>